<evidence type="ECO:0000255" key="1">
    <source>
        <dbReference type="HAMAP-Rule" id="MF_01366"/>
    </source>
</evidence>
<evidence type="ECO:0000305" key="2"/>
<feature type="chain" id="PRO_0000261822" description="Large ribosomal subunit protein uL13">
    <location>
        <begin position="1"/>
        <end position="142"/>
    </location>
</feature>
<comment type="function">
    <text evidence="1">This protein is one of the early assembly proteins of the 50S ribosomal subunit, although it is not seen to bind rRNA by itself. It is important during the early stages of 50S assembly.</text>
</comment>
<comment type="subunit">
    <text evidence="1">Part of the 50S ribosomal subunit.</text>
</comment>
<comment type="similarity">
    <text evidence="1">Belongs to the universal ribosomal protein uL13 family.</text>
</comment>
<accession>Q87SI5</accession>
<sequence length="142" mass="15961">MKTFVAKPETVKRDWYVVDAEGKTLGRLASEIASRLRGKHKAEYTPHVDAGDYIIVINAEKVAVTGNKAKDKVYYRHSEFPGGLKSITFEKLIDRKPEMVLELAVKGMLPRGPLGRAMYRKLKVYAGAEHNHVAQQPQVLDI</sequence>
<reference key="1">
    <citation type="journal article" date="2003" name="Lancet">
        <title>Genome sequence of Vibrio parahaemolyticus: a pathogenic mechanism distinct from that of V. cholerae.</title>
        <authorList>
            <person name="Makino K."/>
            <person name="Oshima K."/>
            <person name="Kurokawa K."/>
            <person name="Yokoyama K."/>
            <person name="Uda T."/>
            <person name="Tagomori K."/>
            <person name="Iijima Y."/>
            <person name="Najima M."/>
            <person name="Nakano M."/>
            <person name="Yamashita A."/>
            <person name="Kubota Y."/>
            <person name="Kimura S."/>
            <person name="Yasunaga T."/>
            <person name="Honda T."/>
            <person name="Shinagawa H."/>
            <person name="Hattori M."/>
            <person name="Iida T."/>
        </authorList>
    </citation>
    <scope>NUCLEOTIDE SEQUENCE [LARGE SCALE GENOMIC DNA]</scope>
    <source>
        <strain>RIMD 2210633</strain>
    </source>
</reference>
<proteinExistence type="inferred from homology"/>
<dbReference type="EMBL" id="BA000031">
    <property type="protein sequence ID" value="BAC58701.1"/>
    <property type="molecule type" value="Genomic_DNA"/>
</dbReference>
<dbReference type="RefSeq" id="NP_796817.1">
    <property type="nucleotide sequence ID" value="NC_004603.1"/>
</dbReference>
<dbReference type="RefSeq" id="WP_005396465.1">
    <property type="nucleotide sequence ID" value="NC_004603.1"/>
</dbReference>
<dbReference type="SMR" id="Q87SI5"/>
<dbReference type="GeneID" id="70913395"/>
<dbReference type="KEGG" id="vpa:VP0438"/>
<dbReference type="PATRIC" id="fig|223926.6.peg.417"/>
<dbReference type="eggNOG" id="COG0102">
    <property type="taxonomic scope" value="Bacteria"/>
</dbReference>
<dbReference type="HOGENOM" id="CLU_082184_2_2_6"/>
<dbReference type="Proteomes" id="UP000002493">
    <property type="component" value="Chromosome 1"/>
</dbReference>
<dbReference type="GO" id="GO:0022625">
    <property type="term" value="C:cytosolic large ribosomal subunit"/>
    <property type="evidence" value="ECO:0007669"/>
    <property type="project" value="TreeGrafter"/>
</dbReference>
<dbReference type="GO" id="GO:0003729">
    <property type="term" value="F:mRNA binding"/>
    <property type="evidence" value="ECO:0007669"/>
    <property type="project" value="TreeGrafter"/>
</dbReference>
<dbReference type="GO" id="GO:0003735">
    <property type="term" value="F:structural constituent of ribosome"/>
    <property type="evidence" value="ECO:0007669"/>
    <property type="project" value="InterPro"/>
</dbReference>
<dbReference type="GO" id="GO:0017148">
    <property type="term" value="P:negative regulation of translation"/>
    <property type="evidence" value="ECO:0007669"/>
    <property type="project" value="TreeGrafter"/>
</dbReference>
<dbReference type="GO" id="GO:0006412">
    <property type="term" value="P:translation"/>
    <property type="evidence" value="ECO:0007669"/>
    <property type="project" value="UniProtKB-UniRule"/>
</dbReference>
<dbReference type="CDD" id="cd00392">
    <property type="entry name" value="Ribosomal_L13"/>
    <property type="match status" value="1"/>
</dbReference>
<dbReference type="FunFam" id="3.90.1180.10:FF:000001">
    <property type="entry name" value="50S ribosomal protein L13"/>
    <property type="match status" value="1"/>
</dbReference>
<dbReference type="Gene3D" id="3.90.1180.10">
    <property type="entry name" value="Ribosomal protein L13"/>
    <property type="match status" value="1"/>
</dbReference>
<dbReference type="HAMAP" id="MF_01366">
    <property type="entry name" value="Ribosomal_uL13"/>
    <property type="match status" value="1"/>
</dbReference>
<dbReference type="InterPro" id="IPR005822">
    <property type="entry name" value="Ribosomal_uL13"/>
</dbReference>
<dbReference type="InterPro" id="IPR005823">
    <property type="entry name" value="Ribosomal_uL13_bac-type"/>
</dbReference>
<dbReference type="InterPro" id="IPR023563">
    <property type="entry name" value="Ribosomal_uL13_CS"/>
</dbReference>
<dbReference type="InterPro" id="IPR036899">
    <property type="entry name" value="Ribosomal_uL13_sf"/>
</dbReference>
<dbReference type="NCBIfam" id="TIGR01066">
    <property type="entry name" value="rplM_bact"/>
    <property type="match status" value="1"/>
</dbReference>
<dbReference type="PANTHER" id="PTHR11545:SF2">
    <property type="entry name" value="LARGE RIBOSOMAL SUBUNIT PROTEIN UL13M"/>
    <property type="match status" value="1"/>
</dbReference>
<dbReference type="PANTHER" id="PTHR11545">
    <property type="entry name" value="RIBOSOMAL PROTEIN L13"/>
    <property type="match status" value="1"/>
</dbReference>
<dbReference type="Pfam" id="PF00572">
    <property type="entry name" value="Ribosomal_L13"/>
    <property type="match status" value="1"/>
</dbReference>
<dbReference type="PIRSF" id="PIRSF002181">
    <property type="entry name" value="Ribosomal_L13"/>
    <property type="match status" value="1"/>
</dbReference>
<dbReference type="SUPFAM" id="SSF52161">
    <property type="entry name" value="Ribosomal protein L13"/>
    <property type="match status" value="1"/>
</dbReference>
<dbReference type="PROSITE" id="PS00783">
    <property type="entry name" value="RIBOSOMAL_L13"/>
    <property type="match status" value="1"/>
</dbReference>
<organism>
    <name type="scientific">Vibrio parahaemolyticus serotype O3:K6 (strain RIMD 2210633)</name>
    <dbReference type="NCBI Taxonomy" id="223926"/>
    <lineage>
        <taxon>Bacteria</taxon>
        <taxon>Pseudomonadati</taxon>
        <taxon>Pseudomonadota</taxon>
        <taxon>Gammaproteobacteria</taxon>
        <taxon>Vibrionales</taxon>
        <taxon>Vibrionaceae</taxon>
        <taxon>Vibrio</taxon>
    </lineage>
</organism>
<protein>
    <recommendedName>
        <fullName evidence="1">Large ribosomal subunit protein uL13</fullName>
    </recommendedName>
    <alternativeName>
        <fullName evidence="2">50S ribosomal protein L13</fullName>
    </alternativeName>
</protein>
<gene>
    <name evidence="1" type="primary">rplM</name>
    <name type="ordered locus">VP0438</name>
</gene>
<name>RL13_VIBPA</name>
<keyword id="KW-0687">Ribonucleoprotein</keyword>
<keyword id="KW-0689">Ribosomal protein</keyword>